<reference key="1">
    <citation type="journal article" date="2006" name="J. Bacteriol.">
        <title>The genome sequence of Methanosphaera stadtmanae reveals why this human intestinal archaeon is restricted to methanol and H2 for methane formation and ATP synthesis.</title>
        <authorList>
            <person name="Fricke W.F."/>
            <person name="Seedorf H."/>
            <person name="Henne A."/>
            <person name="Kruer M."/>
            <person name="Liesegang H."/>
            <person name="Hedderich R."/>
            <person name="Gottschalk G."/>
            <person name="Thauer R.K."/>
        </authorList>
    </citation>
    <scope>NUCLEOTIDE SEQUENCE [LARGE SCALE GENOMIC DNA]</scope>
    <source>
        <strain>ATCC 43021 / DSM 3091 / JCM 11832 / MCB-3</strain>
    </source>
</reference>
<comment type="function">
    <text evidence="1">Part of the ABC transporter complex PstSACB involved in phosphate import. Responsible for energy coupling to the transport system.</text>
</comment>
<comment type="catalytic activity">
    <reaction evidence="1">
        <text>phosphate(out) + ATP + H2O = ADP + 2 phosphate(in) + H(+)</text>
        <dbReference type="Rhea" id="RHEA:24440"/>
        <dbReference type="ChEBI" id="CHEBI:15377"/>
        <dbReference type="ChEBI" id="CHEBI:15378"/>
        <dbReference type="ChEBI" id="CHEBI:30616"/>
        <dbReference type="ChEBI" id="CHEBI:43474"/>
        <dbReference type="ChEBI" id="CHEBI:456216"/>
        <dbReference type="EC" id="7.3.2.1"/>
    </reaction>
</comment>
<comment type="subunit">
    <text evidence="1">The complex is composed of two ATP-binding proteins (PstB), two transmembrane proteins (PstC and PstA) and a solute-binding protein (PstS).</text>
</comment>
<comment type="subcellular location">
    <subcellularLocation>
        <location evidence="1">Cell membrane</location>
        <topology evidence="1">Peripheral membrane protein</topology>
    </subcellularLocation>
</comment>
<comment type="similarity">
    <text evidence="1">Belongs to the ABC transporter superfamily. Phosphate importer (TC 3.A.1.7) family.</text>
</comment>
<proteinExistence type="inferred from homology"/>
<protein>
    <recommendedName>
        <fullName evidence="1">Phosphate import ATP-binding protein PstB</fullName>
        <ecNumber evidence="1">7.3.2.1</ecNumber>
    </recommendedName>
    <alternativeName>
        <fullName evidence="1">ABC phosphate transporter</fullName>
    </alternativeName>
    <alternativeName>
        <fullName evidence="1">Phosphate-transporting ATPase</fullName>
    </alternativeName>
</protein>
<organism>
    <name type="scientific">Methanosphaera stadtmanae (strain ATCC 43021 / DSM 3091 / JCM 11832 / MCB-3)</name>
    <dbReference type="NCBI Taxonomy" id="339860"/>
    <lineage>
        <taxon>Archaea</taxon>
        <taxon>Methanobacteriati</taxon>
        <taxon>Methanobacteriota</taxon>
        <taxon>Methanomada group</taxon>
        <taxon>Methanobacteria</taxon>
        <taxon>Methanobacteriales</taxon>
        <taxon>Methanobacteriaceae</taxon>
        <taxon>Methanosphaera</taxon>
    </lineage>
</organism>
<name>PSTB_METST</name>
<dbReference type="EC" id="7.3.2.1" evidence="1"/>
<dbReference type="EMBL" id="CP000102">
    <property type="protein sequence ID" value="ABC56750.1"/>
    <property type="molecule type" value="Genomic_DNA"/>
</dbReference>
<dbReference type="RefSeq" id="WP_011405950.1">
    <property type="nucleotide sequence ID" value="NC_007681.1"/>
</dbReference>
<dbReference type="SMR" id="Q2NHW1"/>
<dbReference type="STRING" id="339860.Msp_0340"/>
<dbReference type="GeneID" id="41324914"/>
<dbReference type="KEGG" id="mst:Msp_0340"/>
<dbReference type="eggNOG" id="arCOG00231">
    <property type="taxonomic scope" value="Archaea"/>
</dbReference>
<dbReference type="HOGENOM" id="CLU_000604_1_22_2"/>
<dbReference type="OrthoDB" id="31298at2157"/>
<dbReference type="Proteomes" id="UP000001931">
    <property type="component" value="Chromosome"/>
</dbReference>
<dbReference type="GO" id="GO:0005886">
    <property type="term" value="C:plasma membrane"/>
    <property type="evidence" value="ECO:0007669"/>
    <property type="project" value="UniProtKB-SubCell"/>
</dbReference>
<dbReference type="GO" id="GO:0005524">
    <property type="term" value="F:ATP binding"/>
    <property type="evidence" value="ECO:0007669"/>
    <property type="project" value="UniProtKB-KW"/>
</dbReference>
<dbReference type="GO" id="GO:0016887">
    <property type="term" value="F:ATP hydrolysis activity"/>
    <property type="evidence" value="ECO:0007669"/>
    <property type="project" value="InterPro"/>
</dbReference>
<dbReference type="GO" id="GO:0015415">
    <property type="term" value="F:ATPase-coupled phosphate ion transmembrane transporter activity"/>
    <property type="evidence" value="ECO:0007669"/>
    <property type="project" value="UniProtKB-EC"/>
</dbReference>
<dbReference type="GO" id="GO:0035435">
    <property type="term" value="P:phosphate ion transmembrane transport"/>
    <property type="evidence" value="ECO:0007669"/>
    <property type="project" value="InterPro"/>
</dbReference>
<dbReference type="CDD" id="cd03260">
    <property type="entry name" value="ABC_PstB_phosphate_transporter"/>
    <property type="match status" value="1"/>
</dbReference>
<dbReference type="FunFam" id="3.40.50.300:FF:000132">
    <property type="entry name" value="Phosphate import ATP-binding protein PstB"/>
    <property type="match status" value="1"/>
</dbReference>
<dbReference type="Gene3D" id="3.40.50.300">
    <property type="entry name" value="P-loop containing nucleotide triphosphate hydrolases"/>
    <property type="match status" value="1"/>
</dbReference>
<dbReference type="InterPro" id="IPR003593">
    <property type="entry name" value="AAA+_ATPase"/>
</dbReference>
<dbReference type="InterPro" id="IPR003439">
    <property type="entry name" value="ABC_transporter-like_ATP-bd"/>
</dbReference>
<dbReference type="InterPro" id="IPR017871">
    <property type="entry name" value="ABC_transporter-like_CS"/>
</dbReference>
<dbReference type="InterPro" id="IPR027417">
    <property type="entry name" value="P-loop_NTPase"/>
</dbReference>
<dbReference type="InterPro" id="IPR005670">
    <property type="entry name" value="PstB-like"/>
</dbReference>
<dbReference type="NCBIfam" id="TIGR00972">
    <property type="entry name" value="3a0107s01c2"/>
    <property type="match status" value="1"/>
</dbReference>
<dbReference type="PANTHER" id="PTHR43423">
    <property type="entry name" value="ABC TRANSPORTER I FAMILY MEMBER 17"/>
    <property type="match status" value="1"/>
</dbReference>
<dbReference type="PANTHER" id="PTHR43423:SF1">
    <property type="entry name" value="ABC TRANSPORTER I FAMILY MEMBER 17"/>
    <property type="match status" value="1"/>
</dbReference>
<dbReference type="Pfam" id="PF00005">
    <property type="entry name" value="ABC_tran"/>
    <property type="match status" value="1"/>
</dbReference>
<dbReference type="SMART" id="SM00382">
    <property type="entry name" value="AAA"/>
    <property type="match status" value="1"/>
</dbReference>
<dbReference type="SUPFAM" id="SSF52540">
    <property type="entry name" value="P-loop containing nucleoside triphosphate hydrolases"/>
    <property type="match status" value="1"/>
</dbReference>
<dbReference type="PROSITE" id="PS00211">
    <property type="entry name" value="ABC_TRANSPORTER_1"/>
    <property type="match status" value="1"/>
</dbReference>
<dbReference type="PROSITE" id="PS50893">
    <property type="entry name" value="ABC_TRANSPORTER_2"/>
    <property type="match status" value="1"/>
</dbReference>
<dbReference type="PROSITE" id="PS51238">
    <property type="entry name" value="PSTB"/>
    <property type="match status" value="1"/>
</dbReference>
<sequence length="252" mass="28399">MSNKVIEVKNLNTYFDDHNVLKNINTDIEKNSVTALIGPSGCGKSTFLRTLNRMNDLIPIFRKEGQILLDGKDIYDNNVDVVELRKKVGMVFQKANPFPKSIYDNVAYGLRIHGEKDEDKIEKIVKKSLKAAALWDEVEDKLDKSALGLSGGQQQRLCIARTIAVSPEIILMDEPCSALDPISTIKVEDLINQLKKDYTIVIVTHNMQQATRVSKYTSFFLNGEIIETGNTDDIFLNPKNKQTENYITGRFG</sequence>
<feature type="chain" id="PRO_0000272589" description="Phosphate import ATP-binding protein PstB">
    <location>
        <begin position="1"/>
        <end position="252"/>
    </location>
</feature>
<feature type="domain" description="ABC transporter" evidence="1">
    <location>
        <begin position="6"/>
        <end position="247"/>
    </location>
</feature>
<feature type="binding site" evidence="1">
    <location>
        <begin position="38"/>
        <end position="45"/>
    </location>
    <ligand>
        <name>ATP</name>
        <dbReference type="ChEBI" id="CHEBI:30616"/>
    </ligand>
</feature>
<keyword id="KW-0067">ATP-binding</keyword>
<keyword id="KW-1003">Cell membrane</keyword>
<keyword id="KW-0472">Membrane</keyword>
<keyword id="KW-0547">Nucleotide-binding</keyword>
<keyword id="KW-0592">Phosphate transport</keyword>
<keyword id="KW-1185">Reference proteome</keyword>
<keyword id="KW-1278">Translocase</keyword>
<keyword id="KW-0813">Transport</keyword>
<evidence type="ECO:0000255" key="1">
    <source>
        <dbReference type="HAMAP-Rule" id="MF_01702"/>
    </source>
</evidence>
<gene>
    <name evidence="1" type="primary">pstB</name>
    <name type="ordered locus">Msp_0340</name>
</gene>
<accession>Q2NHW1</accession>